<evidence type="ECO:0000250" key="1">
    <source>
        <dbReference type="UniProtKB" id="P09683"/>
    </source>
</evidence>
<evidence type="ECO:0000250" key="2">
    <source>
        <dbReference type="UniProtKB" id="P11384"/>
    </source>
</evidence>
<evidence type="ECO:0000250" key="3">
    <source>
        <dbReference type="UniProtKB" id="Q08535"/>
    </source>
</evidence>
<evidence type="ECO:0000269" key="4">
    <source>
    </source>
</evidence>
<evidence type="ECO:0000303" key="5">
    <source>
    </source>
</evidence>
<evidence type="ECO:0000305" key="6"/>
<comment type="function">
    <text evidence="2 3">Hormone involved in different processes, such as regulation of the pH of the duodenal content, food intake and water homeostasis. Exerts its biological effects by binding to secretin receptor (SCTR), a G-protein coupled receptor expressed in the basolateral domain of several cells. Acts as a key gastrointestinal hormone by regulating the pH of the duodenal content. Secreted by S cells of the duodenum in the crypts of Lieberkuehn and regulates the pH of the duodenum by (1) inhibiting the secretion of gastric acid from the parietal cells of the stomach and (2) stimulating the production of bicarbonate (NaHCO(3)) from the ductal cells of the pancreas (By similarity). Production of bicarbonate is essential to neutralize the pH and ensure no damage is done to the small intestine by the gastric acid. In addition to regulating the pH of the duodenal content, plays a central role in diet induced thermogenesis: acts as a non-sympathetic brown fat (BAT) activator mediating prandial thermogenesis, which consequentially induces satiation. Mechanistically, secretin released by the gut after a meal binds to secretin receptor (SCTR) in brown adipocytes, activating brown fat thermogenesis by stimulating lipolysis, which is sensed in the brain and promotes satiation. Also able to stimulate lipolysis in white adipocytes (By similarity). Also plays an important role in cellular osmoregulation: released into the systemic circulation in response to hyperosmolality and acts at different levels in the hypothalamus, pituitary and kidney to regulate water homeostasis (By similarity). Also plays a role in the central nervous system, possibly by acting as a neuropeptide hormone: required for hippocampal synaptic function and neural progenitor cells maintenance (By similarity).</text>
</comment>
<comment type="subcellular location">
    <subcellularLocation>
        <location evidence="4">Secreted</location>
    </subcellularLocation>
</comment>
<comment type="similarity">
    <text evidence="6">Belongs to the glucagon family.</text>
</comment>
<protein>
    <recommendedName>
        <fullName evidence="5">Secretin</fullName>
    </recommendedName>
</protein>
<sequence length="27" mass="3106">HSDGTLTSELSRLRDRARLQRLLQGLL</sequence>
<name>SECR_RABIT</name>
<keyword id="KW-0027">Amidation</keyword>
<keyword id="KW-0903">Direct protein sequencing</keyword>
<keyword id="KW-0372">Hormone</keyword>
<keyword id="KW-1185">Reference proteome</keyword>
<keyword id="KW-0964">Secreted</keyword>
<proteinExistence type="evidence at protein level"/>
<organism>
    <name type="scientific">Oryctolagus cuniculus</name>
    <name type="common">Rabbit</name>
    <dbReference type="NCBI Taxonomy" id="9986"/>
    <lineage>
        <taxon>Eukaryota</taxon>
        <taxon>Metazoa</taxon>
        <taxon>Chordata</taxon>
        <taxon>Craniata</taxon>
        <taxon>Vertebrata</taxon>
        <taxon>Euteleostomi</taxon>
        <taxon>Mammalia</taxon>
        <taxon>Eutheria</taxon>
        <taxon>Euarchontoglires</taxon>
        <taxon>Glires</taxon>
        <taxon>Lagomorpha</taxon>
        <taxon>Leporidae</taxon>
        <taxon>Oryctolagus</taxon>
    </lineage>
</organism>
<gene>
    <name evidence="1" type="primary">SCT</name>
</gene>
<dbReference type="PIR" id="C60415">
    <property type="entry name" value="C60415"/>
</dbReference>
<dbReference type="SMR" id="P32647"/>
<dbReference type="InParanoid" id="P32647"/>
<dbReference type="Proteomes" id="UP000001811">
    <property type="component" value="Unplaced"/>
</dbReference>
<dbReference type="GO" id="GO:0005615">
    <property type="term" value="C:extracellular space"/>
    <property type="evidence" value="ECO:0000250"/>
    <property type="project" value="UniProtKB"/>
</dbReference>
<dbReference type="GO" id="GO:0046659">
    <property type="term" value="F:digestive hormone activity"/>
    <property type="evidence" value="ECO:0000250"/>
    <property type="project" value="UniProtKB"/>
</dbReference>
<dbReference type="GO" id="GO:0005179">
    <property type="term" value="F:hormone activity"/>
    <property type="evidence" value="ECO:0000250"/>
    <property type="project" value="UniProtKB"/>
</dbReference>
<dbReference type="GO" id="GO:0007189">
    <property type="term" value="P:adenylate cyclase-activating G protein-coupled receptor signaling pathway"/>
    <property type="evidence" value="ECO:0000250"/>
    <property type="project" value="UniProtKB"/>
</dbReference>
<dbReference type="GO" id="GO:0002024">
    <property type="term" value="P:diet induced thermogenesis"/>
    <property type="evidence" value="ECO:0000250"/>
    <property type="project" value="UniProtKB"/>
</dbReference>
<dbReference type="GO" id="GO:0021766">
    <property type="term" value="P:hippocampus development"/>
    <property type="evidence" value="ECO:0000250"/>
    <property type="project" value="UniProtKB"/>
</dbReference>
<dbReference type="GO" id="GO:0009992">
    <property type="term" value="P:intracellular water homeostasis"/>
    <property type="evidence" value="ECO:0000250"/>
    <property type="project" value="UniProtKB"/>
</dbReference>
<dbReference type="GO" id="GO:1903640">
    <property type="term" value="P:negative regulation of gastrin-induced gastric acid secretion"/>
    <property type="evidence" value="ECO:0007669"/>
    <property type="project" value="TreeGrafter"/>
</dbReference>
<dbReference type="GO" id="GO:0050996">
    <property type="term" value="P:positive regulation of lipid catabolic process"/>
    <property type="evidence" value="ECO:0000250"/>
    <property type="project" value="UniProtKB"/>
</dbReference>
<dbReference type="GO" id="GO:0090187">
    <property type="term" value="P:positive regulation of pancreatic juice secretion"/>
    <property type="evidence" value="ECO:0007669"/>
    <property type="project" value="TreeGrafter"/>
</dbReference>
<dbReference type="GO" id="GO:0090274">
    <property type="term" value="P:positive regulation of somatostatin secretion"/>
    <property type="evidence" value="ECO:0007669"/>
    <property type="project" value="TreeGrafter"/>
</dbReference>
<dbReference type="GO" id="GO:0032098">
    <property type="term" value="P:regulation of appetite"/>
    <property type="evidence" value="ECO:0000250"/>
    <property type="project" value="UniProtKB"/>
</dbReference>
<dbReference type="GO" id="GO:0048167">
    <property type="term" value="P:regulation of synaptic plasticity"/>
    <property type="evidence" value="ECO:0000250"/>
    <property type="project" value="UniProtKB"/>
</dbReference>
<dbReference type="GO" id="GO:0031667">
    <property type="term" value="P:response to nutrient levels"/>
    <property type="evidence" value="ECO:0000250"/>
    <property type="project" value="UniProtKB"/>
</dbReference>
<dbReference type="InterPro" id="IPR000532">
    <property type="entry name" value="Glucagon_GIP_secretin_VIP"/>
</dbReference>
<dbReference type="InterPro" id="IPR015675">
    <property type="entry name" value="Prosecretin"/>
</dbReference>
<dbReference type="PANTHER" id="PTHR17378">
    <property type="entry name" value="SECRETIN"/>
    <property type="match status" value="1"/>
</dbReference>
<dbReference type="PANTHER" id="PTHR17378:SF1">
    <property type="entry name" value="SECRETIN"/>
    <property type="match status" value="1"/>
</dbReference>
<dbReference type="Pfam" id="PF00123">
    <property type="entry name" value="Hormone_2"/>
    <property type="match status" value="1"/>
</dbReference>
<dbReference type="SMART" id="SM00070">
    <property type="entry name" value="GLUCA"/>
    <property type="match status" value="1"/>
</dbReference>
<dbReference type="PROSITE" id="PS00260">
    <property type="entry name" value="GLUCAGON"/>
    <property type="match status" value="1"/>
</dbReference>
<reference key="1">
    <citation type="journal article" date="1990" name="Peptides">
        <title>Amino acid sequence of VIP, PHI and secretin from the rabbit small intestine.</title>
        <authorList>
            <person name="Gossen D."/>
            <person name="Buscail L."/>
            <person name="Cauvin A."/>
            <person name="Gourlet P."/>
            <person name="de Neef P."/>
            <person name="Rathe J."/>
            <person name="Robberecht P."/>
            <person name="Vandermeers-Piret M.C."/>
            <person name="Vandermeers A."/>
            <person name="Christophe J."/>
        </authorList>
    </citation>
    <scope>PROTEIN SEQUENCE</scope>
    <scope>SUBCELLULAR LOCATION</scope>
    <scope>AMIDATION AT LEU-27</scope>
    <source>
        <tissue>Small intestine</tissue>
    </source>
</reference>
<feature type="peptide" id="PRO_0000043936" description="Secretin" evidence="4">
    <location>
        <begin position="1"/>
        <end position="27"/>
    </location>
</feature>
<feature type="modified residue" description="Leucine amide" evidence="4">
    <location>
        <position position="27"/>
    </location>
</feature>
<accession>P32647</accession>